<proteinExistence type="inferred from homology"/>
<organism>
    <name type="scientific">Escherichia coli O9:H4 (strain HS)</name>
    <dbReference type="NCBI Taxonomy" id="331112"/>
    <lineage>
        <taxon>Bacteria</taxon>
        <taxon>Pseudomonadati</taxon>
        <taxon>Pseudomonadota</taxon>
        <taxon>Gammaproteobacteria</taxon>
        <taxon>Enterobacterales</taxon>
        <taxon>Enterobacteriaceae</taxon>
        <taxon>Escherichia</taxon>
    </lineage>
</organism>
<reference key="1">
    <citation type="journal article" date="2008" name="J. Bacteriol.">
        <title>The pangenome structure of Escherichia coli: comparative genomic analysis of E. coli commensal and pathogenic isolates.</title>
        <authorList>
            <person name="Rasko D.A."/>
            <person name="Rosovitz M.J."/>
            <person name="Myers G.S.A."/>
            <person name="Mongodin E.F."/>
            <person name="Fricke W.F."/>
            <person name="Gajer P."/>
            <person name="Crabtree J."/>
            <person name="Sebaihia M."/>
            <person name="Thomson N.R."/>
            <person name="Chaudhuri R."/>
            <person name="Henderson I.R."/>
            <person name="Sperandio V."/>
            <person name="Ravel J."/>
        </authorList>
    </citation>
    <scope>NUCLEOTIDE SEQUENCE [LARGE SCALE GENOMIC DNA]</scope>
    <source>
        <strain>HS</strain>
    </source>
</reference>
<comment type="function">
    <text evidence="1">Catalyzes the irreversible transfer of a propylamine group from the amino donor S-adenosylmethioninamine (decarboxy-AdoMet) to putrescine (1,4-diaminobutane) to yield spermidine.</text>
</comment>
<comment type="catalytic activity">
    <reaction evidence="1">
        <text>S-adenosyl 3-(methylsulfanyl)propylamine + putrescine = S-methyl-5'-thioadenosine + spermidine + H(+)</text>
        <dbReference type="Rhea" id="RHEA:12721"/>
        <dbReference type="ChEBI" id="CHEBI:15378"/>
        <dbReference type="ChEBI" id="CHEBI:17509"/>
        <dbReference type="ChEBI" id="CHEBI:57443"/>
        <dbReference type="ChEBI" id="CHEBI:57834"/>
        <dbReference type="ChEBI" id="CHEBI:326268"/>
        <dbReference type="EC" id="2.5.1.16"/>
    </reaction>
</comment>
<comment type="pathway">
    <text evidence="1">Amine and polyamine biosynthesis; spermidine biosynthesis; spermidine from putrescine: step 1/1.</text>
</comment>
<comment type="subunit">
    <text evidence="1">Homodimer or homotetramer.</text>
</comment>
<comment type="subcellular location">
    <subcellularLocation>
        <location evidence="1">Cytoplasm</location>
    </subcellularLocation>
</comment>
<comment type="similarity">
    <text evidence="1">Belongs to the spermidine/spermine synthase family.</text>
</comment>
<dbReference type="EC" id="2.5.1.16" evidence="1"/>
<dbReference type="EMBL" id="CP000802">
    <property type="protein sequence ID" value="ABV04524.1"/>
    <property type="molecule type" value="Genomic_DNA"/>
</dbReference>
<dbReference type="RefSeq" id="WP_000818411.1">
    <property type="nucleotide sequence ID" value="NC_009800.1"/>
</dbReference>
<dbReference type="SMR" id="A7ZW70"/>
<dbReference type="GeneID" id="75202064"/>
<dbReference type="KEGG" id="ecx:EcHS_A0125"/>
<dbReference type="HOGENOM" id="CLU_048199_0_0_6"/>
<dbReference type="UniPathway" id="UPA00248">
    <property type="reaction ID" value="UER00314"/>
</dbReference>
<dbReference type="GO" id="GO:0005829">
    <property type="term" value="C:cytosol"/>
    <property type="evidence" value="ECO:0007669"/>
    <property type="project" value="TreeGrafter"/>
</dbReference>
<dbReference type="GO" id="GO:0004766">
    <property type="term" value="F:spermidine synthase activity"/>
    <property type="evidence" value="ECO:0007669"/>
    <property type="project" value="UniProtKB-UniRule"/>
</dbReference>
<dbReference type="GO" id="GO:0008295">
    <property type="term" value="P:spermidine biosynthetic process"/>
    <property type="evidence" value="ECO:0007669"/>
    <property type="project" value="UniProtKB-UniRule"/>
</dbReference>
<dbReference type="CDD" id="cd02440">
    <property type="entry name" value="AdoMet_MTases"/>
    <property type="match status" value="1"/>
</dbReference>
<dbReference type="FunFam" id="2.30.140.10:FF:000002">
    <property type="entry name" value="Polyamine aminopropyltransferase"/>
    <property type="match status" value="1"/>
</dbReference>
<dbReference type="FunFam" id="3.40.50.150:FF:000026">
    <property type="entry name" value="Polyamine aminopropyltransferase"/>
    <property type="match status" value="1"/>
</dbReference>
<dbReference type="Gene3D" id="2.30.140.10">
    <property type="entry name" value="Spermidine synthase, tetramerisation domain"/>
    <property type="match status" value="1"/>
</dbReference>
<dbReference type="Gene3D" id="3.40.50.150">
    <property type="entry name" value="Vaccinia Virus protein VP39"/>
    <property type="match status" value="1"/>
</dbReference>
<dbReference type="HAMAP" id="MF_00198">
    <property type="entry name" value="Spermidine_synth"/>
    <property type="match status" value="1"/>
</dbReference>
<dbReference type="InterPro" id="IPR030374">
    <property type="entry name" value="PABS"/>
</dbReference>
<dbReference type="InterPro" id="IPR030373">
    <property type="entry name" value="PABS_CS"/>
</dbReference>
<dbReference type="InterPro" id="IPR029063">
    <property type="entry name" value="SAM-dependent_MTases_sf"/>
</dbReference>
<dbReference type="InterPro" id="IPR001045">
    <property type="entry name" value="Spermi_synthase"/>
</dbReference>
<dbReference type="InterPro" id="IPR035246">
    <property type="entry name" value="Spermidine_synt_N"/>
</dbReference>
<dbReference type="InterPro" id="IPR037163">
    <property type="entry name" value="Spermidine_synt_N_sf"/>
</dbReference>
<dbReference type="NCBIfam" id="NF037959">
    <property type="entry name" value="MFS_SpdSyn"/>
    <property type="match status" value="1"/>
</dbReference>
<dbReference type="NCBIfam" id="NF002010">
    <property type="entry name" value="PRK00811.1"/>
    <property type="match status" value="1"/>
</dbReference>
<dbReference type="NCBIfam" id="TIGR00417">
    <property type="entry name" value="speE"/>
    <property type="match status" value="1"/>
</dbReference>
<dbReference type="PANTHER" id="PTHR11558:SF11">
    <property type="entry name" value="SPERMIDINE SYNTHASE"/>
    <property type="match status" value="1"/>
</dbReference>
<dbReference type="PANTHER" id="PTHR11558">
    <property type="entry name" value="SPERMIDINE/SPERMINE SYNTHASE"/>
    <property type="match status" value="1"/>
</dbReference>
<dbReference type="Pfam" id="PF17284">
    <property type="entry name" value="Spermine_synt_N"/>
    <property type="match status" value="1"/>
</dbReference>
<dbReference type="Pfam" id="PF01564">
    <property type="entry name" value="Spermine_synth"/>
    <property type="match status" value="1"/>
</dbReference>
<dbReference type="SUPFAM" id="SSF53335">
    <property type="entry name" value="S-adenosyl-L-methionine-dependent methyltransferases"/>
    <property type="match status" value="1"/>
</dbReference>
<dbReference type="PROSITE" id="PS01330">
    <property type="entry name" value="PABS_1"/>
    <property type="match status" value="1"/>
</dbReference>
<dbReference type="PROSITE" id="PS51006">
    <property type="entry name" value="PABS_2"/>
    <property type="match status" value="1"/>
</dbReference>
<accession>A7ZW70</accession>
<sequence>MAEKKQWHETLHDQFGQYFAVDNVLYHEKTDHQDLIIFENAAFGRVMALDGVVQTTERDEFIYHEMMTHVPLLAHGHAKHVLIIGGGDGAMLREVTRHKNVESITMVEIDAGVVSFCRQYLPNHNAGSYDDPRFKLVIDDGVNFVNQTSQTFDVIISDCTDPIGPGESLFTSAFYEGCKRCLNPGGIFVAQNGVCFLQQEEAIDSHRKLSHYFSDVGFYQAAIPTYYGGIMTFAWATDNDALRHLSTEIIQARFLASGLKCRYYNPAIHTAAFALPQYLQDALASQPS</sequence>
<name>SPEE_ECOHS</name>
<keyword id="KW-0963">Cytoplasm</keyword>
<keyword id="KW-0620">Polyamine biosynthesis</keyword>
<keyword id="KW-0745">Spermidine biosynthesis</keyword>
<keyword id="KW-0808">Transferase</keyword>
<protein>
    <recommendedName>
        <fullName evidence="1">Polyamine aminopropyltransferase</fullName>
    </recommendedName>
    <alternativeName>
        <fullName evidence="1">Putrescine aminopropyltransferase</fullName>
        <shortName evidence="1">PAPT</shortName>
    </alternativeName>
    <alternativeName>
        <fullName evidence="1">Spermidine synthase</fullName>
        <shortName evidence="1">SPDS</shortName>
        <shortName evidence="1">SPDSY</shortName>
        <ecNumber evidence="1">2.5.1.16</ecNumber>
    </alternativeName>
</protein>
<evidence type="ECO:0000255" key="1">
    <source>
        <dbReference type="HAMAP-Rule" id="MF_00198"/>
    </source>
</evidence>
<feature type="chain" id="PRO_1000058551" description="Polyamine aminopropyltransferase">
    <location>
        <begin position="1"/>
        <end position="288"/>
    </location>
</feature>
<feature type="domain" description="PABS" evidence="1">
    <location>
        <begin position="9"/>
        <end position="238"/>
    </location>
</feature>
<feature type="active site" description="Proton acceptor" evidence="1">
    <location>
        <position position="158"/>
    </location>
</feature>
<feature type="binding site" evidence="1">
    <location>
        <position position="33"/>
    </location>
    <ligand>
        <name>S-methyl-5'-thioadenosine</name>
        <dbReference type="ChEBI" id="CHEBI:17509"/>
    </ligand>
</feature>
<feature type="binding site" evidence="1">
    <location>
        <position position="64"/>
    </location>
    <ligand>
        <name>spermidine</name>
        <dbReference type="ChEBI" id="CHEBI:57834"/>
    </ligand>
</feature>
<feature type="binding site" evidence="1">
    <location>
        <position position="88"/>
    </location>
    <ligand>
        <name>spermidine</name>
        <dbReference type="ChEBI" id="CHEBI:57834"/>
    </ligand>
</feature>
<feature type="binding site" evidence="1">
    <location>
        <position position="108"/>
    </location>
    <ligand>
        <name>S-methyl-5'-thioadenosine</name>
        <dbReference type="ChEBI" id="CHEBI:17509"/>
    </ligand>
</feature>
<feature type="binding site" evidence="1">
    <location>
        <begin position="140"/>
        <end position="141"/>
    </location>
    <ligand>
        <name>S-methyl-5'-thioadenosine</name>
        <dbReference type="ChEBI" id="CHEBI:17509"/>
    </ligand>
</feature>
<feature type="binding site" evidence="1">
    <location>
        <begin position="158"/>
        <end position="161"/>
    </location>
    <ligand>
        <name>spermidine</name>
        <dbReference type="ChEBI" id="CHEBI:57834"/>
    </ligand>
</feature>
<feature type="binding site" evidence="1">
    <location>
        <position position="165"/>
    </location>
    <ligand>
        <name>S-methyl-5'-thioadenosine</name>
        <dbReference type="ChEBI" id="CHEBI:17509"/>
    </ligand>
</feature>
<gene>
    <name evidence="1" type="primary">speE</name>
    <name type="ordered locus">EcHS_A0125</name>
</gene>